<reference key="1">
    <citation type="journal article" date="1999" name="J. Biol. Chem.">
        <title>Export of recombinant Mycobacterium tuberculosis superoxide dismutase is dependent upon both information in the protein and mycobacterial export machinery. A model for studying export of leaderless proteins by pathogenic mycobacteria.</title>
        <authorList>
            <person name="Harth G."/>
            <person name="Horwitz M.A."/>
        </authorList>
    </citation>
    <scope>NUCLEOTIDE SEQUENCE [GENOMIC DNA]</scope>
    <scope>CHARACTERIZATION</scope>
    <source>
        <strain>1-2C</strain>
    </source>
</reference>
<reference key="2">
    <citation type="submission" date="2001-09" db="EMBL/GenBank/DDBJ databases">
        <authorList>
            <person name="Tullius M.V."/>
            <person name="Harth G."/>
            <person name="Horwitz M.A."/>
        </authorList>
    </citation>
    <scope>SEQUENCE REVISION TO 117 AND 202</scope>
</reference>
<reference key="3">
    <citation type="journal article" date="1995" name="Clin. Mol. Pathol.">
        <title>Rapid identification of mycobacteria from AIDS patients by capillary electrophoretic profiling of amplified SOD gene.</title>
        <authorList>
            <person name="Bull T.J."/>
            <person name="Shanson D.C."/>
            <person name="Archard L.C."/>
        </authorList>
    </citation>
    <scope>NUCLEOTIDE SEQUENCE [GENOMIC DNA] OF 28-165</scope>
    <source>
        <strain>ATCC 14468 / DSM 43277 / NCIB 9953 / NCTC 10265 / W-113</strain>
    </source>
</reference>
<accession>P53649</accession>
<accession>Q9S612</accession>
<comment type="function">
    <text>Destroys superoxide anion radicals which are normally produced within the cells and which are toxic to biological systems.</text>
</comment>
<comment type="catalytic activity">
    <reaction>
        <text>2 superoxide + 2 H(+) = H2O2 + O2</text>
        <dbReference type="Rhea" id="RHEA:20696"/>
        <dbReference type="ChEBI" id="CHEBI:15378"/>
        <dbReference type="ChEBI" id="CHEBI:15379"/>
        <dbReference type="ChEBI" id="CHEBI:16240"/>
        <dbReference type="ChEBI" id="CHEBI:18421"/>
        <dbReference type="EC" id="1.15.1.1"/>
    </reaction>
</comment>
<comment type="cofactor">
    <cofactor evidence="1">
        <name>Mn(2+)</name>
        <dbReference type="ChEBI" id="CHEBI:29035"/>
    </cofactor>
    <text evidence="1">Binds 1 Mn(2+) ion per subunit.</text>
</comment>
<comment type="subunit">
    <text>Homotetramer.</text>
</comment>
<comment type="subcellular location">
    <subcellularLocation>
        <location>Secreted</location>
    </subcellularLocation>
    <text>Partially secreted.</text>
</comment>
<comment type="similarity">
    <text evidence="2">Belongs to the iron/manganese superoxide dismutase family.</text>
</comment>
<keyword id="KW-0464">Manganese</keyword>
<keyword id="KW-0479">Metal-binding</keyword>
<keyword id="KW-0560">Oxidoreductase</keyword>
<keyword id="KW-0964">Secreted</keyword>
<dbReference type="EC" id="1.15.1.1"/>
<dbReference type="EMBL" id="AF061031">
    <property type="protein sequence ID" value="AAD15825.2"/>
    <property type="molecule type" value="Genomic_DNA"/>
</dbReference>
<dbReference type="EMBL" id="Z48214">
    <property type="protein sequence ID" value="CAA88247.1"/>
    <property type="molecule type" value="Genomic_DNA"/>
</dbReference>
<dbReference type="PIR" id="S52366">
    <property type="entry name" value="S52366"/>
</dbReference>
<dbReference type="RefSeq" id="WP_011731275.1">
    <property type="nucleotide sequence ID" value="NZ_UGQO01000001.1"/>
</dbReference>
<dbReference type="SMR" id="P53649"/>
<dbReference type="OMA" id="DSLINWD"/>
<dbReference type="GO" id="GO:0005576">
    <property type="term" value="C:extracellular region"/>
    <property type="evidence" value="ECO:0007669"/>
    <property type="project" value="UniProtKB-SubCell"/>
</dbReference>
<dbReference type="GO" id="GO:0046872">
    <property type="term" value="F:metal ion binding"/>
    <property type="evidence" value="ECO:0007669"/>
    <property type="project" value="UniProtKB-KW"/>
</dbReference>
<dbReference type="GO" id="GO:0004784">
    <property type="term" value="F:superoxide dismutase activity"/>
    <property type="evidence" value="ECO:0007669"/>
    <property type="project" value="UniProtKB-EC"/>
</dbReference>
<dbReference type="FunFam" id="1.10.287.990:FF:000001">
    <property type="entry name" value="Superoxide dismutase"/>
    <property type="match status" value="1"/>
</dbReference>
<dbReference type="FunFam" id="3.55.40.20:FF:000004">
    <property type="entry name" value="Superoxide dismutase [Fe]"/>
    <property type="match status" value="1"/>
</dbReference>
<dbReference type="Gene3D" id="1.10.287.990">
    <property type="entry name" value="Fe,Mn superoxide dismutase (SOD) domain"/>
    <property type="match status" value="1"/>
</dbReference>
<dbReference type="Gene3D" id="3.55.40.20">
    <property type="entry name" value="Iron/manganese superoxide dismutase, C-terminal domain"/>
    <property type="match status" value="1"/>
</dbReference>
<dbReference type="InterPro" id="IPR050265">
    <property type="entry name" value="Fe/Mn_Superoxide_Dismutase"/>
</dbReference>
<dbReference type="InterPro" id="IPR001189">
    <property type="entry name" value="Mn/Fe_SOD"/>
</dbReference>
<dbReference type="InterPro" id="IPR019833">
    <property type="entry name" value="Mn/Fe_SOD_BS"/>
</dbReference>
<dbReference type="InterPro" id="IPR019832">
    <property type="entry name" value="Mn/Fe_SOD_C"/>
</dbReference>
<dbReference type="InterPro" id="IPR019831">
    <property type="entry name" value="Mn/Fe_SOD_N"/>
</dbReference>
<dbReference type="InterPro" id="IPR036324">
    <property type="entry name" value="Mn/Fe_SOD_N_sf"/>
</dbReference>
<dbReference type="InterPro" id="IPR036314">
    <property type="entry name" value="SOD_C_sf"/>
</dbReference>
<dbReference type="PANTHER" id="PTHR11404">
    <property type="entry name" value="SUPEROXIDE DISMUTASE 2"/>
    <property type="match status" value="1"/>
</dbReference>
<dbReference type="PANTHER" id="PTHR11404:SF6">
    <property type="entry name" value="SUPEROXIDE DISMUTASE [MN], MITOCHONDRIAL"/>
    <property type="match status" value="1"/>
</dbReference>
<dbReference type="Pfam" id="PF02777">
    <property type="entry name" value="Sod_Fe_C"/>
    <property type="match status" value="1"/>
</dbReference>
<dbReference type="Pfam" id="PF00081">
    <property type="entry name" value="Sod_Fe_N"/>
    <property type="match status" value="1"/>
</dbReference>
<dbReference type="PIRSF" id="PIRSF000349">
    <property type="entry name" value="SODismutase"/>
    <property type="match status" value="1"/>
</dbReference>
<dbReference type="PRINTS" id="PR01703">
    <property type="entry name" value="MNSODISMTASE"/>
</dbReference>
<dbReference type="SUPFAM" id="SSF54719">
    <property type="entry name" value="Fe,Mn superoxide dismutase (SOD), C-terminal domain"/>
    <property type="match status" value="1"/>
</dbReference>
<dbReference type="SUPFAM" id="SSF46609">
    <property type="entry name" value="Fe,Mn superoxide dismutase (SOD), N-terminal domain"/>
    <property type="match status" value="1"/>
</dbReference>
<dbReference type="PROSITE" id="PS00088">
    <property type="entry name" value="SOD_MN"/>
    <property type="match status" value="1"/>
</dbReference>
<proteinExistence type="evidence at protein level"/>
<protein>
    <recommendedName>
        <fullName>Superoxide dismutase [Mn]</fullName>
        <ecNumber>1.15.1.1</ecNumber>
    </recommendedName>
</protein>
<name>SODM_MYCSM</name>
<feature type="initiator methionine" description="Removed" evidence="1">
    <location>
        <position position="1"/>
    </location>
</feature>
<feature type="chain" id="PRO_0000160059" description="Superoxide dismutase [Mn]">
    <location>
        <begin position="2"/>
        <end position="207"/>
    </location>
</feature>
<feature type="binding site" evidence="1">
    <location>
        <position position="28"/>
    </location>
    <ligand>
        <name>Mn(2+)</name>
        <dbReference type="ChEBI" id="CHEBI:29035"/>
    </ligand>
</feature>
<feature type="binding site" evidence="1">
    <location>
        <position position="76"/>
    </location>
    <ligand>
        <name>Mn(2+)</name>
        <dbReference type="ChEBI" id="CHEBI:29035"/>
    </ligand>
</feature>
<feature type="binding site" evidence="1">
    <location>
        <position position="160"/>
    </location>
    <ligand>
        <name>Mn(2+)</name>
        <dbReference type="ChEBI" id="CHEBI:29035"/>
    </ligand>
</feature>
<feature type="binding site" evidence="1">
    <location>
        <position position="164"/>
    </location>
    <ligand>
        <name>Mn(2+)</name>
        <dbReference type="ChEBI" id="CHEBI:29035"/>
    </ligand>
</feature>
<gene>
    <name type="primary">sodA</name>
    <name type="synonym">sod</name>
</gene>
<evidence type="ECO:0000250" key="1"/>
<evidence type="ECO:0000305" key="2"/>
<sequence length="207" mass="22936">MAEYTLPDLDYDYGALEPHISGQINELHHSKHHATYVKGVNDAIAKLEEARANGDHAAIFLNEKNLAFHLGGHINHSIWWKNLSPNGGDKPTGELAAAIDDQFGSFDKFQAQFTAAANGLQGSGWAVLGYDSLGGRLLTFQLYDQQANVPLGIIPLLQVDMWEHAFYLQYKNVKADYVKAFWNVVNWDDVQNRFAAATSKTSGLIFG</sequence>
<organism>
    <name type="scientific">Mycolicibacterium smegmatis</name>
    <name type="common">Mycobacterium smegmatis</name>
    <dbReference type="NCBI Taxonomy" id="1772"/>
    <lineage>
        <taxon>Bacteria</taxon>
        <taxon>Bacillati</taxon>
        <taxon>Actinomycetota</taxon>
        <taxon>Actinomycetes</taxon>
        <taxon>Mycobacteriales</taxon>
        <taxon>Mycobacteriaceae</taxon>
        <taxon>Mycolicibacterium</taxon>
    </lineage>
</organism>